<evidence type="ECO:0000255" key="1">
    <source>
        <dbReference type="HAMAP-Rule" id="MF_00227"/>
    </source>
</evidence>
<proteinExistence type="inferred from homology"/>
<protein>
    <recommendedName>
        <fullName evidence="1">Ribonuclease P protein component</fullName>
        <shortName evidence="1">RNase P protein</shortName>
        <shortName evidence="1">RNaseP protein</shortName>
        <ecNumber evidence="1">3.1.26.5</ecNumber>
    </recommendedName>
    <alternativeName>
        <fullName evidence="1">Protein C5</fullName>
    </alternativeName>
</protein>
<name>RNPA_MYCMS</name>
<dbReference type="EC" id="3.1.26.5" evidence="1"/>
<dbReference type="EMBL" id="BX293980">
    <property type="protein sequence ID" value="CAE77668.1"/>
    <property type="molecule type" value="Genomic_DNA"/>
</dbReference>
<dbReference type="RefSeq" id="NP_976026.1">
    <property type="nucleotide sequence ID" value="NC_005364.2"/>
</dbReference>
<dbReference type="RefSeq" id="WP_011167186.1">
    <property type="nucleotide sequence ID" value="NC_005364.2"/>
</dbReference>
<dbReference type="SMR" id="Q6MRS3"/>
<dbReference type="STRING" id="272632.MSC_1067"/>
<dbReference type="KEGG" id="mmy:MSC_1067"/>
<dbReference type="PATRIC" id="fig|272632.4.peg.1155"/>
<dbReference type="eggNOG" id="COG0594">
    <property type="taxonomic scope" value="Bacteria"/>
</dbReference>
<dbReference type="HOGENOM" id="CLU_117179_9_1_14"/>
<dbReference type="BRENDA" id="3.1.26.5">
    <property type="organism ID" value="3533"/>
</dbReference>
<dbReference type="Proteomes" id="UP000001016">
    <property type="component" value="Chromosome"/>
</dbReference>
<dbReference type="GO" id="GO:0030677">
    <property type="term" value="C:ribonuclease P complex"/>
    <property type="evidence" value="ECO:0007669"/>
    <property type="project" value="TreeGrafter"/>
</dbReference>
<dbReference type="GO" id="GO:0042781">
    <property type="term" value="F:3'-tRNA processing endoribonuclease activity"/>
    <property type="evidence" value="ECO:0007669"/>
    <property type="project" value="TreeGrafter"/>
</dbReference>
<dbReference type="GO" id="GO:0004526">
    <property type="term" value="F:ribonuclease P activity"/>
    <property type="evidence" value="ECO:0007669"/>
    <property type="project" value="UniProtKB-UniRule"/>
</dbReference>
<dbReference type="GO" id="GO:0000049">
    <property type="term" value="F:tRNA binding"/>
    <property type="evidence" value="ECO:0007669"/>
    <property type="project" value="UniProtKB-UniRule"/>
</dbReference>
<dbReference type="GO" id="GO:0001682">
    <property type="term" value="P:tRNA 5'-leader removal"/>
    <property type="evidence" value="ECO:0007669"/>
    <property type="project" value="UniProtKB-UniRule"/>
</dbReference>
<dbReference type="Gene3D" id="3.30.230.10">
    <property type="match status" value="1"/>
</dbReference>
<dbReference type="HAMAP" id="MF_00227">
    <property type="entry name" value="RNase_P"/>
    <property type="match status" value="1"/>
</dbReference>
<dbReference type="InterPro" id="IPR020568">
    <property type="entry name" value="Ribosomal_Su5_D2-typ_SF"/>
</dbReference>
<dbReference type="InterPro" id="IPR014721">
    <property type="entry name" value="Ribsml_uS5_D2-typ_fold_subgr"/>
</dbReference>
<dbReference type="InterPro" id="IPR000100">
    <property type="entry name" value="RNase_P"/>
</dbReference>
<dbReference type="InterPro" id="IPR020539">
    <property type="entry name" value="RNase_P_CS"/>
</dbReference>
<dbReference type="NCBIfam" id="TIGR00188">
    <property type="entry name" value="rnpA"/>
    <property type="match status" value="1"/>
</dbReference>
<dbReference type="PANTHER" id="PTHR33992">
    <property type="entry name" value="RIBONUCLEASE P PROTEIN COMPONENT"/>
    <property type="match status" value="1"/>
</dbReference>
<dbReference type="PANTHER" id="PTHR33992:SF1">
    <property type="entry name" value="RIBONUCLEASE P PROTEIN COMPONENT"/>
    <property type="match status" value="1"/>
</dbReference>
<dbReference type="Pfam" id="PF00825">
    <property type="entry name" value="Ribonuclease_P"/>
    <property type="match status" value="1"/>
</dbReference>
<dbReference type="SUPFAM" id="SSF54211">
    <property type="entry name" value="Ribosomal protein S5 domain 2-like"/>
    <property type="match status" value="1"/>
</dbReference>
<dbReference type="PROSITE" id="PS00648">
    <property type="entry name" value="RIBONUCLEASE_P"/>
    <property type="match status" value="1"/>
</dbReference>
<gene>
    <name evidence="1" type="primary">rnpA</name>
    <name type="ordered locus">MSC_1067</name>
</gene>
<organism>
    <name type="scientific">Mycoplasma mycoides subsp. mycoides SC (strain CCUG 32753 / NCTC 10114 / PG1)</name>
    <dbReference type="NCBI Taxonomy" id="272632"/>
    <lineage>
        <taxon>Bacteria</taxon>
        <taxon>Bacillati</taxon>
        <taxon>Mycoplasmatota</taxon>
        <taxon>Mollicutes</taxon>
        <taxon>Mycoplasmataceae</taxon>
        <taxon>Mycoplasma</taxon>
    </lineage>
</organism>
<feature type="chain" id="PRO_0000198489" description="Ribonuclease P protein component">
    <location>
        <begin position="1"/>
        <end position="109"/>
    </location>
</feature>
<reference key="1">
    <citation type="journal article" date="2004" name="Genome Res.">
        <title>The genome sequence of Mycoplasma mycoides subsp. mycoides SC type strain PG1T, the causative agent of contagious bovine pleuropneumonia (CBPP).</title>
        <authorList>
            <person name="Westberg J."/>
            <person name="Persson A."/>
            <person name="Holmberg A."/>
            <person name="Goesmann A."/>
            <person name="Lundeberg J."/>
            <person name="Johansson K.-E."/>
            <person name="Pettersson B."/>
            <person name="Uhlen M."/>
        </authorList>
    </citation>
    <scope>NUCLEOTIDE SEQUENCE [LARGE SCALE GENOMIC DNA]</scope>
    <source>
        <strain>CCUG 32753 / NCTC 10114 / PG1</strain>
    </source>
</reference>
<keyword id="KW-0255">Endonuclease</keyword>
<keyword id="KW-0378">Hydrolase</keyword>
<keyword id="KW-0540">Nuclease</keyword>
<keyword id="KW-1185">Reference proteome</keyword>
<keyword id="KW-0694">RNA-binding</keyword>
<keyword id="KW-0819">tRNA processing</keyword>
<accession>Q6MRS3</accession>
<sequence>MKNKRVIKKNFEFQEIINYKKTIKNFCFIIYYKDNDQSYLKYGISVGKKIGNAVVRNKVKRQIRMILRQNINEIGTISKDVIILVRKSVLKLKYATLSKSLIKLIKEIK</sequence>
<comment type="function">
    <text evidence="1">RNaseP catalyzes the removal of the 5'-leader sequence from pre-tRNA to produce the mature 5'-terminus. It can also cleave other RNA substrates such as 4.5S RNA. The protein component plays an auxiliary but essential role in vivo by binding to the 5'-leader sequence and broadening the substrate specificity of the ribozyme.</text>
</comment>
<comment type="catalytic activity">
    <reaction evidence="1">
        <text>Endonucleolytic cleavage of RNA, removing 5'-extranucleotides from tRNA precursor.</text>
        <dbReference type="EC" id="3.1.26.5"/>
    </reaction>
</comment>
<comment type="subunit">
    <text evidence="1">Consists of a catalytic RNA component (M1 or rnpB) and a protein subunit.</text>
</comment>
<comment type="similarity">
    <text evidence="1">Belongs to the RnpA family.</text>
</comment>